<dbReference type="EMBL" id="AE017340">
    <property type="protein sequence ID" value="AAV82654.1"/>
    <property type="molecule type" value="Genomic_DNA"/>
</dbReference>
<dbReference type="RefSeq" id="WP_011235054.1">
    <property type="nucleotide sequence ID" value="NC_006512.1"/>
</dbReference>
<dbReference type="SMR" id="Q5QWN6"/>
<dbReference type="STRING" id="283942.IL1822"/>
<dbReference type="GeneID" id="41337006"/>
<dbReference type="KEGG" id="ilo:IL1822"/>
<dbReference type="eggNOG" id="COG1495">
    <property type="taxonomic scope" value="Bacteria"/>
</dbReference>
<dbReference type="HOGENOM" id="CLU_098660_2_0_6"/>
<dbReference type="OrthoDB" id="3711263at2"/>
<dbReference type="Proteomes" id="UP000001171">
    <property type="component" value="Chromosome"/>
</dbReference>
<dbReference type="GO" id="GO:0005886">
    <property type="term" value="C:plasma membrane"/>
    <property type="evidence" value="ECO:0007669"/>
    <property type="project" value="UniProtKB-SubCell"/>
</dbReference>
<dbReference type="GO" id="GO:0009055">
    <property type="term" value="F:electron transfer activity"/>
    <property type="evidence" value="ECO:0007669"/>
    <property type="project" value="UniProtKB-UniRule"/>
</dbReference>
<dbReference type="GO" id="GO:0015035">
    <property type="term" value="F:protein-disulfide reductase activity"/>
    <property type="evidence" value="ECO:0007669"/>
    <property type="project" value="UniProtKB-UniRule"/>
</dbReference>
<dbReference type="GO" id="GO:0006457">
    <property type="term" value="P:protein folding"/>
    <property type="evidence" value="ECO:0007669"/>
    <property type="project" value="InterPro"/>
</dbReference>
<dbReference type="Gene3D" id="1.20.1550.10">
    <property type="entry name" value="DsbB-like"/>
    <property type="match status" value="1"/>
</dbReference>
<dbReference type="HAMAP" id="MF_00286">
    <property type="entry name" value="DsbB"/>
    <property type="match status" value="1"/>
</dbReference>
<dbReference type="InterPro" id="IPR003752">
    <property type="entry name" value="DiS_bond_form_DsbB/BdbC"/>
</dbReference>
<dbReference type="InterPro" id="IPR022920">
    <property type="entry name" value="Disulphide_bond_form_DsbB"/>
</dbReference>
<dbReference type="InterPro" id="IPR050183">
    <property type="entry name" value="DsbB"/>
</dbReference>
<dbReference type="InterPro" id="IPR023380">
    <property type="entry name" value="DsbB-like_sf"/>
</dbReference>
<dbReference type="NCBIfam" id="NF002485">
    <property type="entry name" value="PRK01749.1"/>
    <property type="match status" value="1"/>
</dbReference>
<dbReference type="PANTHER" id="PTHR36570">
    <property type="entry name" value="DISULFIDE BOND FORMATION PROTEIN B"/>
    <property type="match status" value="1"/>
</dbReference>
<dbReference type="PANTHER" id="PTHR36570:SF2">
    <property type="entry name" value="DISULFIDE BOND FORMATION PROTEIN B"/>
    <property type="match status" value="1"/>
</dbReference>
<dbReference type="Pfam" id="PF02600">
    <property type="entry name" value="DsbB"/>
    <property type="match status" value="1"/>
</dbReference>
<dbReference type="SUPFAM" id="SSF158442">
    <property type="entry name" value="DsbB-like"/>
    <property type="match status" value="1"/>
</dbReference>
<feature type="chain" id="PRO_0000298364" description="Disulfide bond formation protein B">
    <location>
        <begin position="1"/>
        <end position="181"/>
    </location>
</feature>
<feature type="topological domain" description="Cytoplasmic" evidence="1">
    <location>
        <begin position="1"/>
        <end position="13"/>
    </location>
</feature>
<feature type="transmembrane region" description="Helical" evidence="1">
    <location>
        <begin position="14"/>
        <end position="30"/>
    </location>
</feature>
<feature type="topological domain" description="Periplasmic" evidence="1">
    <location>
        <begin position="31"/>
        <end position="48"/>
    </location>
</feature>
<feature type="transmembrane region" description="Helical" evidence="1">
    <location>
        <begin position="49"/>
        <end position="64"/>
    </location>
</feature>
<feature type="topological domain" description="Cytoplasmic" evidence="1">
    <location>
        <begin position="65"/>
        <end position="71"/>
    </location>
</feature>
<feature type="transmembrane region" description="Helical" evidence="1">
    <location>
        <begin position="72"/>
        <end position="89"/>
    </location>
</feature>
<feature type="topological domain" description="Periplasmic" evidence="1">
    <location>
        <begin position="90"/>
        <end position="145"/>
    </location>
</feature>
<feature type="transmembrane region" description="Helical" evidence="1">
    <location>
        <begin position="146"/>
        <end position="164"/>
    </location>
</feature>
<feature type="topological domain" description="Cytoplasmic" evidence="1">
    <location>
        <begin position="165"/>
        <end position="181"/>
    </location>
</feature>
<feature type="disulfide bond" description="Redox-active" evidence="1">
    <location>
        <begin position="40"/>
        <end position="43"/>
    </location>
</feature>
<feature type="disulfide bond" description="Redox-active" evidence="1">
    <location>
        <begin position="105"/>
        <end position="131"/>
    </location>
</feature>
<protein>
    <recommendedName>
        <fullName evidence="1">Disulfide bond formation protein B</fullName>
    </recommendedName>
    <alternativeName>
        <fullName evidence="1">Disulfide oxidoreductase</fullName>
    </alternativeName>
</protein>
<keyword id="KW-0997">Cell inner membrane</keyword>
<keyword id="KW-1003">Cell membrane</keyword>
<keyword id="KW-0143">Chaperone</keyword>
<keyword id="KW-1015">Disulfide bond</keyword>
<keyword id="KW-0249">Electron transport</keyword>
<keyword id="KW-0472">Membrane</keyword>
<keyword id="KW-0560">Oxidoreductase</keyword>
<keyword id="KW-0676">Redox-active center</keyword>
<keyword id="KW-1185">Reference proteome</keyword>
<keyword id="KW-0812">Transmembrane</keyword>
<keyword id="KW-1133">Transmembrane helix</keyword>
<keyword id="KW-0813">Transport</keyword>
<reference key="1">
    <citation type="journal article" date="2004" name="Proc. Natl. Acad. Sci. U.S.A.">
        <title>Genome sequence of the deep-sea gamma-proteobacterium Idiomarina loihiensis reveals amino acid fermentation as a source of carbon and energy.</title>
        <authorList>
            <person name="Hou S."/>
            <person name="Saw J.H."/>
            <person name="Lee K.S."/>
            <person name="Freitas T.A."/>
            <person name="Belisle C."/>
            <person name="Kawarabayasi Y."/>
            <person name="Donachie S.P."/>
            <person name="Pikina A."/>
            <person name="Galperin M.Y."/>
            <person name="Koonin E.V."/>
            <person name="Makarova K.S."/>
            <person name="Omelchenko M.V."/>
            <person name="Sorokin A."/>
            <person name="Wolf Y.I."/>
            <person name="Li Q.X."/>
            <person name="Keum Y.S."/>
            <person name="Campbell S."/>
            <person name="Denery J."/>
            <person name="Aizawa S."/>
            <person name="Shibata S."/>
            <person name="Malahoff A."/>
            <person name="Alam M."/>
        </authorList>
    </citation>
    <scope>NUCLEOTIDE SEQUENCE [LARGE SCALE GENOMIC DNA]</scope>
    <source>
        <strain>ATCC BAA-735 / DSM 15497 / L2-TR</strain>
    </source>
</reference>
<sequence length="181" mass="20076">MLSVGQWPNKPFAWLLLFLGCSGLLGAALYFQMVLNLEPCVKCVYQRMAVIGIGLSAIVGLFGSGLWLTRWAALIGWLYSSYQGLLIAYDHWDLQTSKNAFFAVCESAPNFPDWAPMHEWMPGLFAAPGLCGDIDWQWLGLGMPGWMTVIFAGLLLIGIIVTICHIISSFTKKDGLVLYHK</sequence>
<gene>
    <name evidence="1" type="primary">dsbB</name>
    <name type="ordered locus">IL1822</name>
</gene>
<accession>Q5QWN6</accession>
<comment type="function">
    <text evidence="1">Required for disulfide bond formation in some periplasmic proteins. Acts by oxidizing the DsbA protein.</text>
</comment>
<comment type="subcellular location">
    <subcellularLocation>
        <location evidence="1">Cell inner membrane</location>
        <topology evidence="1">Multi-pass membrane protein</topology>
    </subcellularLocation>
</comment>
<comment type="similarity">
    <text evidence="1">Belongs to the DsbB family.</text>
</comment>
<evidence type="ECO:0000255" key="1">
    <source>
        <dbReference type="HAMAP-Rule" id="MF_00286"/>
    </source>
</evidence>
<organism>
    <name type="scientific">Idiomarina loihiensis (strain ATCC BAA-735 / DSM 15497 / L2-TR)</name>
    <dbReference type="NCBI Taxonomy" id="283942"/>
    <lineage>
        <taxon>Bacteria</taxon>
        <taxon>Pseudomonadati</taxon>
        <taxon>Pseudomonadota</taxon>
        <taxon>Gammaproteobacteria</taxon>
        <taxon>Alteromonadales</taxon>
        <taxon>Idiomarinaceae</taxon>
        <taxon>Idiomarina</taxon>
    </lineage>
</organism>
<proteinExistence type="inferred from homology"/>
<name>DSBB_IDILO</name>